<accession>P05684</accession>
<proteinExistence type="predicted"/>
<reference key="1">
    <citation type="journal article" date="1987" name="Mol. Gen. Genet.">
        <title>Characterization and sequence determination of the replicator region in the hairy-root-inducing plasmid pRiA4b.</title>
        <authorList>
            <person name="Nishiguchi R."/>
            <person name="Takanami M."/>
            <person name="Oka A."/>
        </authorList>
    </citation>
    <scope>NUCLEOTIDE SEQUENCE [GENOMIC DNA]</scope>
    <source>
        <strain>A4</strain>
    </source>
</reference>
<gene>
    <name type="primary">repC</name>
</gene>
<comment type="function">
    <text>This protein is coded by a hairy root Ri plasmid, it is probably involved in its replication.</text>
</comment>
<evidence type="ECO:0000256" key="1">
    <source>
        <dbReference type="SAM" id="MobiDB-lite"/>
    </source>
</evidence>
<sequence length="405" mass="44321">MMQTGSVTTPFGRRPMTLALVRRQTALADIKQGKTADKWKVFRDASAAMELLGIQSNSLAVLDALLSFHPETELRQEAQLIVFPSNAQLALRAHGMAGATLRRHIAMLVESGLIVRKDSANGKRYARKDGAGQIERAFGFDLSPLLARSEELAMMAQQVMADRAAFRMAKESLTICRRDVRKLITAAMEEGAEGDWQAVEEVYVELVGRIPRAPTLADVESILEEMWMLQEEIINRLEIRDNSENNSTNAAQSEQHIQNSKPESVNELEPRSEKEQGAKPSEIDRARSEPIKAFPLGMILKACPTIGNYGPSGAVASWRDLMSAAVVVRSMLGVSPSAYQDACEAMGPENAAAAMACILERANFINSPGGYLRDLTRRSELGKFSLGPMIMALLKASGQGTLRFG</sequence>
<name>REPC_RHIRH</name>
<feature type="chain" id="PRO_0000097252" description="Putative replication protein C">
    <location>
        <begin position="1"/>
        <end position="405"/>
    </location>
</feature>
<feature type="region of interest" description="Disordered" evidence="1">
    <location>
        <begin position="245"/>
        <end position="286"/>
    </location>
</feature>
<feature type="compositionally biased region" description="Polar residues" evidence="1">
    <location>
        <begin position="245"/>
        <end position="263"/>
    </location>
</feature>
<feature type="compositionally biased region" description="Basic and acidic residues" evidence="1">
    <location>
        <begin position="268"/>
        <end position="286"/>
    </location>
</feature>
<organism>
    <name type="scientific">Rhizobium rhizogenes</name>
    <name type="common">Agrobacterium rhizogenes</name>
    <dbReference type="NCBI Taxonomy" id="359"/>
    <lineage>
        <taxon>Bacteria</taxon>
        <taxon>Pseudomonadati</taxon>
        <taxon>Pseudomonadota</taxon>
        <taxon>Alphaproteobacteria</taxon>
        <taxon>Hyphomicrobiales</taxon>
        <taxon>Rhizobiaceae</taxon>
        <taxon>Rhizobium/Agrobacterium group</taxon>
        <taxon>Rhizobium</taxon>
    </lineage>
</organism>
<protein>
    <recommendedName>
        <fullName>Putative replication protein C</fullName>
    </recommendedName>
</protein>
<dbReference type="EMBL" id="X04833">
    <property type="protein sequence ID" value="CAA28532.1"/>
    <property type="molecule type" value="Genomic_DNA"/>
</dbReference>
<dbReference type="PIR" id="G32534">
    <property type="entry name" value="G32534"/>
</dbReference>
<dbReference type="eggNOG" id="COG0640">
    <property type="taxonomic scope" value="Bacteria"/>
</dbReference>
<dbReference type="GO" id="GO:0006260">
    <property type="term" value="P:DNA replication"/>
    <property type="evidence" value="ECO:0007669"/>
    <property type="project" value="UniProtKB-KW"/>
</dbReference>
<dbReference type="InterPro" id="IPR047611">
    <property type="entry name" value="RepABC_RepC"/>
</dbReference>
<dbReference type="InterPro" id="IPR021760">
    <property type="entry name" value="RepC_C"/>
</dbReference>
<dbReference type="InterPro" id="IPR005090">
    <property type="entry name" value="RepC_N"/>
</dbReference>
<dbReference type="NCBIfam" id="NF010396">
    <property type="entry name" value="PRK13824.1"/>
    <property type="match status" value="1"/>
</dbReference>
<dbReference type="NCBIfam" id="NF040974">
    <property type="entry name" value="RepABC_RepC"/>
    <property type="match status" value="1"/>
</dbReference>
<dbReference type="Pfam" id="PF03428">
    <property type="entry name" value="RP-C"/>
    <property type="match status" value="1"/>
</dbReference>
<dbReference type="Pfam" id="PF11800">
    <property type="entry name" value="RP-C_C"/>
    <property type="match status" value="1"/>
</dbReference>
<keyword id="KW-0235">DNA replication</keyword>
<keyword id="KW-0614">Plasmid</keyword>
<geneLocation type="plasmid">
    <name>pRiA4b</name>
</geneLocation>